<reference key="1">
    <citation type="journal article" date="2008" name="J. Bacteriol.">
        <title>The genome sequence of the tomato-pathogenic actinomycete Clavibacter michiganensis subsp. michiganensis NCPPB382 reveals a large island involved in pathogenicity.</title>
        <authorList>
            <person name="Gartemann K.-H."/>
            <person name="Abt B."/>
            <person name="Bekel T."/>
            <person name="Burger A."/>
            <person name="Engemann J."/>
            <person name="Fluegel M."/>
            <person name="Gaigalat L."/>
            <person name="Goesmann A."/>
            <person name="Graefen I."/>
            <person name="Kalinowski J."/>
            <person name="Kaup O."/>
            <person name="Kirchner O."/>
            <person name="Krause L."/>
            <person name="Linke B."/>
            <person name="McHardy A."/>
            <person name="Meyer F."/>
            <person name="Pohle S."/>
            <person name="Rueckert C."/>
            <person name="Schneiker S."/>
            <person name="Zellermann E.-M."/>
            <person name="Puehler A."/>
            <person name="Eichenlaub R."/>
            <person name="Kaiser O."/>
            <person name="Bartels D."/>
        </authorList>
    </citation>
    <scope>NUCLEOTIDE SEQUENCE [LARGE SCALE GENOMIC DNA]</scope>
    <source>
        <strain>NCPPB 382</strain>
    </source>
</reference>
<sequence>MTDIVYDKDADLSLIQGRKVAVIGYGSQGHAHALNLRDSGVEVVIGLKEGSTSRAKAEEQGFTVKTPSDASAWADVIVILAPDQHQRGLYADSVRDNLTEGKTLVFAHGFNIRFGYIEAPEGVDVVLVAPKGPGHTVRREFEAGRGVPVIVAVEVDASGKAWDLAWSYAKGIGGLRAGGIRTTFTEETETDLFGEQAVLCGGTSQLVQYGFETLMEAGYQPQIAYFEVLHELKLIVDLMWEGGIAKQRWSISDTAEYGDYVSGPRVISPDVKENMKAVLADIQSGAFADRFIKDQDAGAPEFLELRKKGEEHPIESTGRELRKLFAWNKADDDYTDGSVAR</sequence>
<proteinExistence type="inferred from homology"/>
<name>ILVC_CLAM3</name>
<keyword id="KW-0028">Amino-acid biosynthesis</keyword>
<keyword id="KW-0100">Branched-chain amino acid biosynthesis</keyword>
<keyword id="KW-0460">Magnesium</keyword>
<keyword id="KW-0479">Metal-binding</keyword>
<keyword id="KW-0521">NADP</keyword>
<keyword id="KW-0560">Oxidoreductase</keyword>
<organism>
    <name type="scientific">Clavibacter michiganensis subsp. michiganensis (strain NCPPB 382)</name>
    <dbReference type="NCBI Taxonomy" id="443906"/>
    <lineage>
        <taxon>Bacteria</taxon>
        <taxon>Bacillati</taxon>
        <taxon>Actinomycetota</taxon>
        <taxon>Actinomycetes</taxon>
        <taxon>Micrococcales</taxon>
        <taxon>Microbacteriaceae</taxon>
        <taxon>Clavibacter</taxon>
    </lineage>
</organism>
<feature type="chain" id="PRO_1000050501" description="Ketol-acid reductoisomerase (NADP(+))">
    <location>
        <begin position="1"/>
        <end position="341"/>
    </location>
</feature>
<feature type="domain" description="KARI N-terminal Rossmann" evidence="2">
    <location>
        <begin position="2"/>
        <end position="182"/>
    </location>
</feature>
<feature type="domain" description="KARI C-terminal knotted" evidence="3">
    <location>
        <begin position="183"/>
        <end position="328"/>
    </location>
</feature>
<feature type="active site" evidence="1">
    <location>
        <position position="108"/>
    </location>
</feature>
<feature type="binding site" evidence="1">
    <location>
        <begin position="25"/>
        <end position="28"/>
    </location>
    <ligand>
        <name>NADP(+)</name>
        <dbReference type="ChEBI" id="CHEBI:58349"/>
    </ligand>
</feature>
<feature type="binding site" evidence="1">
    <location>
        <position position="48"/>
    </location>
    <ligand>
        <name>NADP(+)</name>
        <dbReference type="ChEBI" id="CHEBI:58349"/>
    </ligand>
</feature>
<feature type="binding site" evidence="1">
    <location>
        <position position="51"/>
    </location>
    <ligand>
        <name>NADP(+)</name>
        <dbReference type="ChEBI" id="CHEBI:58349"/>
    </ligand>
</feature>
<feature type="binding site" evidence="1">
    <location>
        <position position="53"/>
    </location>
    <ligand>
        <name>NADP(+)</name>
        <dbReference type="ChEBI" id="CHEBI:58349"/>
    </ligand>
</feature>
<feature type="binding site" evidence="1">
    <location>
        <begin position="83"/>
        <end position="86"/>
    </location>
    <ligand>
        <name>NADP(+)</name>
        <dbReference type="ChEBI" id="CHEBI:58349"/>
    </ligand>
</feature>
<feature type="binding site" evidence="1">
    <location>
        <position position="134"/>
    </location>
    <ligand>
        <name>NADP(+)</name>
        <dbReference type="ChEBI" id="CHEBI:58349"/>
    </ligand>
</feature>
<feature type="binding site" evidence="1">
    <location>
        <position position="191"/>
    </location>
    <ligand>
        <name>Mg(2+)</name>
        <dbReference type="ChEBI" id="CHEBI:18420"/>
        <label>1</label>
    </ligand>
</feature>
<feature type="binding site" evidence="1">
    <location>
        <position position="191"/>
    </location>
    <ligand>
        <name>Mg(2+)</name>
        <dbReference type="ChEBI" id="CHEBI:18420"/>
        <label>2</label>
    </ligand>
</feature>
<feature type="binding site" evidence="1">
    <location>
        <position position="195"/>
    </location>
    <ligand>
        <name>Mg(2+)</name>
        <dbReference type="ChEBI" id="CHEBI:18420"/>
        <label>1</label>
    </ligand>
</feature>
<feature type="binding site" evidence="1">
    <location>
        <position position="227"/>
    </location>
    <ligand>
        <name>Mg(2+)</name>
        <dbReference type="ChEBI" id="CHEBI:18420"/>
        <label>2</label>
    </ligand>
</feature>
<feature type="binding site" evidence="1">
    <location>
        <position position="231"/>
    </location>
    <ligand>
        <name>Mg(2+)</name>
        <dbReference type="ChEBI" id="CHEBI:18420"/>
        <label>2</label>
    </ligand>
</feature>
<feature type="binding site" evidence="1">
    <location>
        <position position="252"/>
    </location>
    <ligand>
        <name>substrate</name>
    </ligand>
</feature>
<accession>A5CPY6</accession>
<comment type="function">
    <text evidence="1">Involved in the biosynthesis of branched-chain amino acids (BCAA). Catalyzes an alkyl-migration followed by a ketol-acid reduction of (S)-2-acetolactate (S2AL) to yield (R)-2,3-dihydroxy-isovalerate. In the isomerase reaction, S2AL is rearranged via a Mg-dependent methyl migration to produce 3-hydroxy-3-methyl-2-ketobutyrate (HMKB). In the reductase reaction, this 2-ketoacid undergoes a metal-dependent reduction by NADPH to yield (R)-2,3-dihydroxy-isovalerate.</text>
</comment>
<comment type="catalytic activity">
    <reaction evidence="1">
        <text>(2R)-2,3-dihydroxy-3-methylbutanoate + NADP(+) = (2S)-2-acetolactate + NADPH + H(+)</text>
        <dbReference type="Rhea" id="RHEA:22068"/>
        <dbReference type="ChEBI" id="CHEBI:15378"/>
        <dbReference type="ChEBI" id="CHEBI:49072"/>
        <dbReference type="ChEBI" id="CHEBI:57783"/>
        <dbReference type="ChEBI" id="CHEBI:58349"/>
        <dbReference type="ChEBI" id="CHEBI:58476"/>
        <dbReference type="EC" id="1.1.1.86"/>
    </reaction>
</comment>
<comment type="catalytic activity">
    <reaction evidence="1">
        <text>(2R,3R)-2,3-dihydroxy-3-methylpentanoate + NADP(+) = (S)-2-ethyl-2-hydroxy-3-oxobutanoate + NADPH + H(+)</text>
        <dbReference type="Rhea" id="RHEA:13493"/>
        <dbReference type="ChEBI" id="CHEBI:15378"/>
        <dbReference type="ChEBI" id="CHEBI:49256"/>
        <dbReference type="ChEBI" id="CHEBI:49258"/>
        <dbReference type="ChEBI" id="CHEBI:57783"/>
        <dbReference type="ChEBI" id="CHEBI:58349"/>
        <dbReference type="EC" id="1.1.1.86"/>
    </reaction>
</comment>
<comment type="cofactor">
    <cofactor evidence="1">
        <name>Mg(2+)</name>
        <dbReference type="ChEBI" id="CHEBI:18420"/>
    </cofactor>
    <text evidence="1">Binds 2 magnesium ions per subunit.</text>
</comment>
<comment type="pathway">
    <text evidence="1">Amino-acid biosynthesis; L-isoleucine biosynthesis; L-isoleucine from 2-oxobutanoate: step 2/4.</text>
</comment>
<comment type="pathway">
    <text evidence="1">Amino-acid biosynthesis; L-valine biosynthesis; L-valine from pyruvate: step 2/4.</text>
</comment>
<comment type="similarity">
    <text evidence="1">Belongs to the ketol-acid reductoisomerase family.</text>
</comment>
<evidence type="ECO:0000255" key="1">
    <source>
        <dbReference type="HAMAP-Rule" id="MF_00435"/>
    </source>
</evidence>
<evidence type="ECO:0000255" key="2">
    <source>
        <dbReference type="PROSITE-ProRule" id="PRU01197"/>
    </source>
</evidence>
<evidence type="ECO:0000255" key="3">
    <source>
        <dbReference type="PROSITE-ProRule" id="PRU01198"/>
    </source>
</evidence>
<protein>
    <recommendedName>
        <fullName evidence="1">Ketol-acid reductoisomerase (NADP(+))</fullName>
        <shortName evidence="1">KARI</shortName>
        <ecNumber evidence="1">1.1.1.86</ecNumber>
    </recommendedName>
    <alternativeName>
        <fullName evidence="1">Acetohydroxy-acid isomeroreductase</fullName>
        <shortName evidence="1">AHIR</shortName>
    </alternativeName>
    <alternativeName>
        <fullName evidence="1">Alpha-keto-beta-hydroxylacyl reductoisomerase</fullName>
    </alternativeName>
    <alternativeName>
        <fullName evidence="1">Ketol-acid reductoisomerase type 1</fullName>
    </alternativeName>
    <alternativeName>
        <fullName evidence="1">Ketol-acid reductoisomerase type I</fullName>
    </alternativeName>
</protein>
<gene>
    <name evidence="1" type="primary">ilvC</name>
    <name type="ordered locus">CMM_1096</name>
</gene>
<dbReference type="EC" id="1.1.1.86" evidence="1"/>
<dbReference type="EMBL" id="AM711867">
    <property type="protein sequence ID" value="CAN01139.1"/>
    <property type="molecule type" value="Genomic_DNA"/>
</dbReference>
<dbReference type="RefSeq" id="WP_012037782.1">
    <property type="nucleotide sequence ID" value="NC_009480.1"/>
</dbReference>
<dbReference type="SMR" id="A5CPY6"/>
<dbReference type="KEGG" id="cmi:CMM_1096"/>
<dbReference type="eggNOG" id="COG0059">
    <property type="taxonomic scope" value="Bacteria"/>
</dbReference>
<dbReference type="HOGENOM" id="CLU_033821_0_1_11"/>
<dbReference type="OrthoDB" id="9804088at2"/>
<dbReference type="UniPathway" id="UPA00047">
    <property type="reaction ID" value="UER00056"/>
</dbReference>
<dbReference type="UniPathway" id="UPA00049">
    <property type="reaction ID" value="UER00060"/>
</dbReference>
<dbReference type="Proteomes" id="UP000001564">
    <property type="component" value="Chromosome"/>
</dbReference>
<dbReference type="GO" id="GO:0005829">
    <property type="term" value="C:cytosol"/>
    <property type="evidence" value="ECO:0007669"/>
    <property type="project" value="TreeGrafter"/>
</dbReference>
<dbReference type="GO" id="GO:0004455">
    <property type="term" value="F:ketol-acid reductoisomerase activity"/>
    <property type="evidence" value="ECO:0007669"/>
    <property type="project" value="UniProtKB-UniRule"/>
</dbReference>
<dbReference type="GO" id="GO:0000287">
    <property type="term" value="F:magnesium ion binding"/>
    <property type="evidence" value="ECO:0007669"/>
    <property type="project" value="UniProtKB-UniRule"/>
</dbReference>
<dbReference type="GO" id="GO:0050661">
    <property type="term" value="F:NADP binding"/>
    <property type="evidence" value="ECO:0007669"/>
    <property type="project" value="InterPro"/>
</dbReference>
<dbReference type="GO" id="GO:0009097">
    <property type="term" value="P:isoleucine biosynthetic process"/>
    <property type="evidence" value="ECO:0007669"/>
    <property type="project" value="UniProtKB-UniRule"/>
</dbReference>
<dbReference type="GO" id="GO:0009099">
    <property type="term" value="P:L-valine biosynthetic process"/>
    <property type="evidence" value="ECO:0007669"/>
    <property type="project" value="UniProtKB-UniRule"/>
</dbReference>
<dbReference type="FunFam" id="3.40.50.720:FF:000023">
    <property type="entry name" value="Ketol-acid reductoisomerase (NADP(+))"/>
    <property type="match status" value="1"/>
</dbReference>
<dbReference type="Gene3D" id="6.10.240.10">
    <property type="match status" value="1"/>
</dbReference>
<dbReference type="Gene3D" id="3.40.50.720">
    <property type="entry name" value="NAD(P)-binding Rossmann-like Domain"/>
    <property type="match status" value="1"/>
</dbReference>
<dbReference type="HAMAP" id="MF_00435">
    <property type="entry name" value="IlvC"/>
    <property type="match status" value="1"/>
</dbReference>
<dbReference type="InterPro" id="IPR008927">
    <property type="entry name" value="6-PGluconate_DH-like_C_sf"/>
</dbReference>
<dbReference type="InterPro" id="IPR013023">
    <property type="entry name" value="KARI"/>
</dbReference>
<dbReference type="InterPro" id="IPR000506">
    <property type="entry name" value="KARI_C"/>
</dbReference>
<dbReference type="InterPro" id="IPR013116">
    <property type="entry name" value="KARI_N"/>
</dbReference>
<dbReference type="InterPro" id="IPR014359">
    <property type="entry name" value="KARI_prok"/>
</dbReference>
<dbReference type="InterPro" id="IPR036291">
    <property type="entry name" value="NAD(P)-bd_dom_sf"/>
</dbReference>
<dbReference type="NCBIfam" id="TIGR00465">
    <property type="entry name" value="ilvC"/>
    <property type="match status" value="1"/>
</dbReference>
<dbReference type="NCBIfam" id="NF004017">
    <property type="entry name" value="PRK05479.1"/>
    <property type="match status" value="1"/>
</dbReference>
<dbReference type="NCBIfam" id="NF009940">
    <property type="entry name" value="PRK13403.1"/>
    <property type="match status" value="1"/>
</dbReference>
<dbReference type="PANTHER" id="PTHR21371">
    <property type="entry name" value="KETOL-ACID REDUCTOISOMERASE, MITOCHONDRIAL"/>
    <property type="match status" value="1"/>
</dbReference>
<dbReference type="PANTHER" id="PTHR21371:SF1">
    <property type="entry name" value="KETOL-ACID REDUCTOISOMERASE, MITOCHONDRIAL"/>
    <property type="match status" value="1"/>
</dbReference>
<dbReference type="Pfam" id="PF01450">
    <property type="entry name" value="KARI_C"/>
    <property type="match status" value="1"/>
</dbReference>
<dbReference type="Pfam" id="PF07991">
    <property type="entry name" value="KARI_N"/>
    <property type="match status" value="1"/>
</dbReference>
<dbReference type="PIRSF" id="PIRSF000116">
    <property type="entry name" value="IlvC_gammaproteo"/>
    <property type="match status" value="1"/>
</dbReference>
<dbReference type="SUPFAM" id="SSF48179">
    <property type="entry name" value="6-phosphogluconate dehydrogenase C-terminal domain-like"/>
    <property type="match status" value="1"/>
</dbReference>
<dbReference type="SUPFAM" id="SSF51735">
    <property type="entry name" value="NAD(P)-binding Rossmann-fold domains"/>
    <property type="match status" value="1"/>
</dbReference>
<dbReference type="PROSITE" id="PS51851">
    <property type="entry name" value="KARI_C"/>
    <property type="match status" value="1"/>
</dbReference>
<dbReference type="PROSITE" id="PS51850">
    <property type="entry name" value="KARI_N"/>
    <property type="match status" value="1"/>
</dbReference>